<keyword id="KW-0012">Acyltransferase</keyword>
<keyword id="KW-0028">Amino-acid biosynthesis</keyword>
<keyword id="KW-0963">Cytoplasm</keyword>
<keyword id="KW-0486">Methionine biosynthesis</keyword>
<keyword id="KW-0808">Transferase</keyword>
<comment type="function">
    <text evidence="1">Transfers a succinyl group from succinyl-CoA to L-homoserine, forming succinyl-L-homoserine.</text>
</comment>
<comment type="catalytic activity">
    <reaction evidence="1">
        <text>L-homoserine + succinyl-CoA = O-succinyl-L-homoserine + CoA</text>
        <dbReference type="Rhea" id="RHEA:22008"/>
        <dbReference type="ChEBI" id="CHEBI:57287"/>
        <dbReference type="ChEBI" id="CHEBI:57292"/>
        <dbReference type="ChEBI" id="CHEBI:57476"/>
        <dbReference type="ChEBI" id="CHEBI:57661"/>
        <dbReference type="EC" id="2.3.1.46"/>
    </reaction>
</comment>
<comment type="pathway">
    <text evidence="1">Amino-acid biosynthesis; L-methionine biosynthesis via de novo pathway; O-succinyl-L-homoserine from L-homoserine: step 1/1.</text>
</comment>
<comment type="subcellular location">
    <subcellularLocation>
        <location evidence="1">Cytoplasm</location>
    </subcellularLocation>
</comment>
<comment type="similarity">
    <text evidence="1">Belongs to the MetA family.</text>
</comment>
<feature type="chain" id="PRO_1000115202" description="Homoserine O-succinyltransferase">
    <location>
        <begin position="1"/>
        <end position="309"/>
    </location>
</feature>
<feature type="active site" description="Acyl-thioester intermediate" evidence="1">
    <location>
        <position position="142"/>
    </location>
</feature>
<feature type="active site" description="Proton acceptor" evidence="1">
    <location>
        <position position="235"/>
    </location>
</feature>
<feature type="active site" evidence="1">
    <location>
        <position position="237"/>
    </location>
</feature>
<feature type="binding site" evidence="1">
    <location>
        <position position="163"/>
    </location>
    <ligand>
        <name>substrate</name>
    </ligand>
</feature>
<feature type="binding site" evidence="1">
    <location>
        <position position="192"/>
    </location>
    <ligand>
        <name>substrate</name>
    </ligand>
</feature>
<feature type="binding site" evidence="1">
    <location>
        <position position="249"/>
    </location>
    <ligand>
        <name>substrate</name>
    </ligand>
</feature>
<feature type="site" description="Important for acyl-CoA specificity" evidence="1">
    <location>
        <position position="111"/>
    </location>
</feature>
<feature type="site" description="Important for substrate specificity" evidence="1">
    <location>
        <position position="192"/>
    </location>
</feature>
<sequence>MPIRVPDELPAVSFLRNENVFVMASSRAKTQEIRPLKVLILNLMPKKIETENQFLRLLSNSPLQVDIQLLRVDSRESKNTPTEHLNNFYCDFEDIQDQNFDGLIVTGAPLGLVDFCDVAYWPQIERIIAWAKEHVTSTLFVCWAVQAALNILYGIPKMTREVKLSGIYQHQTLEPLALLTRGFDETFLAPHSRYADFPVEVLQQYTDLDILVSSEEAGAYLFASKDKRVAFVTGHPEYDVDTLAGEYQRDLAAGLNPQVPLNYFPSDDASLRPKASWRSHGHLLFANWLNYYVYQITPFDLRHMNPTLD</sequence>
<reference key="1">
    <citation type="submission" date="2008-04" db="EMBL/GenBank/DDBJ databases">
        <title>Complete sequence of Yersinia pseudotuberculosis PB1/+.</title>
        <authorList>
            <person name="Copeland A."/>
            <person name="Lucas S."/>
            <person name="Lapidus A."/>
            <person name="Glavina del Rio T."/>
            <person name="Dalin E."/>
            <person name="Tice H."/>
            <person name="Bruce D."/>
            <person name="Goodwin L."/>
            <person name="Pitluck S."/>
            <person name="Munk A.C."/>
            <person name="Brettin T."/>
            <person name="Detter J.C."/>
            <person name="Han C."/>
            <person name="Tapia R."/>
            <person name="Schmutz J."/>
            <person name="Larimer F."/>
            <person name="Land M."/>
            <person name="Hauser L."/>
            <person name="Challacombe J.F."/>
            <person name="Green L."/>
            <person name="Lindler L.E."/>
            <person name="Nikolich M.P."/>
            <person name="Richardson P."/>
        </authorList>
    </citation>
    <scope>NUCLEOTIDE SEQUENCE [LARGE SCALE GENOMIC DNA]</scope>
    <source>
        <strain>PB1/+</strain>
    </source>
</reference>
<proteinExistence type="inferred from homology"/>
<name>METAS_YERPB</name>
<dbReference type="EC" id="2.3.1.46" evidence="1"/>
<dbReference type="EMBL" id="CP001048">
    <property type="protein sequence ID" value="ACC90797.1"/>
    <property type="molecule type" value="Genomic_DNA"/>
</dbReference>
<dbReference type="SMR" id="B2K4Z5"/>
<dbReference type="KEGG" id="ypb:YPTS_3844"/>
<dbReference type="PATRIC" id="fig|502801.10.peg.3313"/>
<dbReference type="UniPathway" id="UPA00051">
    <property type="reaction ID" value="UER00075"/>
</dbReference>
<dbReference type="GO" id="GO:0005737">
    <property type="term" value="C:cytoplasm"/>
    <property type="evidence" value="ECO:0007669"/>
    <property type="project" value="UniProtKB-SubCell"/>
</dbReference>
<dbReference type="GO" id="GO:0004414">
    <property type="term" value="F:homoserine O-acetyltransferase activity"/>
    <property type="evidence" value="ECO:0007669"/>
    <property type="project" value="UniProtKB-UniRule"/>
</dbReference>
<dbReference type="GO" id="GO:0008899">
    <property type="term" value="F:homoserine O-succinyltransferase activity"/>
    <property type="evidence" value="ECO:0007669"/>
    <property type="project" value="UniProtKB-EC"/>
</dbReference>
<dbReference type="GO" id="GO:0019281">
    <property type="term" value="P:L-methionine biosynthetic process from homoserine via O-succinyl-L-homoserine and cystathionine"/>
    <property type="evidence" value="ECO:0007669"/>
    <property type="project" value="InterPro"/>
</dbReference>
<dbReference type="CDD" id="cd03131">
    <property type="entry name" value="GATase1_HTS"/>
    <property type="match status" value="1"/>
</dbReference>
<dbReference type="FunFam" id="3.40.50.880:FF:000004">
    <property type="entry name" value="Homoserine O-succinyltransferase"/>
    <property type="match status" value="1"/>
</dbReference>
<dbReference type="Gene3D" id="3.40.50.880">
    <property type="match status" value="1"/>
</dbReference>
<dbReference type="HAMAP" id="MF_00295">
    <property type="entry name" value="MetA_acyltransf"/>
    <property type="match status" value="1"/>
</dbReference>
<dbReference type="InterPro" id="IPR029062">
    <property type="entry name" value="Class_I_gatase-like"/>
</dbReference>
<dbReference type="InterPro" id="IPR005697">
    <property type="entry name" value="HST_MetA"/>
</dbReference>
<dbReference type="InterPro" id="IPR033752">
    <property type="entry name" value="MetA_family"/>
</dbReference>
<dbReference type="NCBIfam" id="TIGR01001">
    <property type="entry name" value="metA"/>
    <property type="match status" value="1"/>
</dbReference>
<dbReference type="PANTHER" id="PTHR20919">
    <property type="entry name" value="HOMOSERINE O-SUCCINYLTRANSFERASE"/>
    <property type="match status" value="1"/>
</dbReference>
<dbReference type="PANTHER" id="PTHR20919:SF0">
    <property type="entry name" value="HOMOSERINE O-SUCCINYLTRANSFERASE"/>
    <property type="match status" value="1"/>
</dbReference>
<dbReference type="Pfam" id="PF04204">
    <property type="entry name" value="HTS"/>
    <property type="match status" value="1"/>
</dbReference>
<dbReference type="PIRSF" id="PIRSF000450">
    <property type="entry name" value="H_ser_succinyltr"/>
    <property type="match status" value="1"/>
</dbReference>
<dbReference type="SUPFAM" id="SSF52317">
    <property type="entry name" value="Class I glutamine amidotransferase-like"/>
    <property type="match status" value="1"/>
</dbReference>
<gene>
    <name evidence="1" type="primary">metAS</name>
    <name type="ordered locus">YPTS_3844</name>
</gene>
<protein>
    <recommendedName>
        <fullName evidence="1">Homoserine O-succinyltransferase</fullName>
        <shortName evidence="1">HST</shortName>
        <ecNumber evidence="1">2.3.1.46</ecNumber>
    </recommendedName>
    <alternativeName>
        <fullName evidence="1">Homoserine transsuccinylase</fullName>
        <shortName evidence="1">HTS</shortName>
    </alternativeName>
</protein>
<accession>B2K4Z5</accession>
<organism>
    <name type="scientific">Yersinia pseudotuberculosis serotype IB (strain PB1/+)</name>
    <dbReference type="NCBI Taxonomy" id="502801"/>
    <lineage>
        <taxon>Bacteria</taxon>
        <taxon>Pseudomonadati</taxon>
        <taxon>Pseudomonadota</taxon>
        <taxon>Gammaproteobacteria</taxon>
        <taxon>Enterobacterales</taxon>
        <taxon>Yersiniaceae</taxon>
        <taxon>Yersinia</taxon>
    </lineage>
</organism>
<evidence type="ECO:0000255" key="1">
    <source>
        <dbReference type="HAMAP-Rule" id="MF_00295"/>
    </source>
</evidence>